<gene>
    <name evidence="1" type="primary">purL</name>
    <name type="ordered locus">LS215_1611</name>
</gene>
<comment type="function">
    <text evidence="1">Part of the phosphoribosylformylglycinamidine synthase complex involved in the purines biosynthetic pathway. Catalyzes the ATP-dependent conversion of formylglycinamide ribonucleotide (FGAR) and glutamine to yield formylglycinamidine ribonucleotide (FGAM) and glutamate. The FGAM synthase complex is composed of three subunits. PurQ produces an ammonia molecule by converting glutamine to glutamate. PurL transfers the ammonia molecule to FGAR to form FGAM in an ATP-dependent manner. PurS interacts with PurQ and PurL and is thought to assist in the transfer of the ammonia molecule from PurQ to PurL.</text>
</comment>
<comment type="catalytic activity">
    <reaction evidence="1">
        <text>N(2)-formyl-N(1)-(5-phospho-beta-D-ribosyl)glycinamide + L-glutamine + ATP + H2O = 2-formamido-N(1)-(5-O-phospho-beta-D-ribosyl)acetamidine + L-glutamate + ADP + phosphate + H(+)</text>
        <dbReference type="Rhea" id="RHEA:17129"/>
        <dbReference type="ChEBI" id="CHEBI:15377"/>
        <dbReference type="ChEBI" id="CHEBI:15378"/>
        <dbReference type="ChEBI" id="CHEBI:29985"/>
        <dbReference type="ChEBI" id="CHEBI:30616"/>
        <dbReference type="ChEBI" id="CHEBI:43474"/>
        <dbReference type="ChEBI" id="CHEBI:58359"/>
        <dbReference type="ChEBI" id="CHEBI:147286"/>
        <dbReference type="ChEBI" id="CHEBI:147287"/>
        <dbReference type="ChEBI" id="CHEBI:456216"/>
        <dbReference type="EC" id="6.3.5.3"/>
    </reaction>
</comment>
<comment type="pathway">
    <text evidence="1">Purine metabolism; IMP biosynthesis via de novo pathway; 5-amino-1-(5-phospho-D-ribosyl)imidazole from N(2)-formyl-N(1)-(5-phospho-D-ribosyl)glycinamide: step 1/2.</text>
</comment>
<comment type="subunit">
    <text evidence="1">Monomer. Part of the FGAM synthase complex composed of 1 PurL, 1 PurQ and 2 PurS subunits.</text>
</comment>
<comment type="subcellular location">
    <subcellularLocation>
        <location evidence="1">Cytoplasm</location>
    </subcellularLocation>
</comment>
<comment type="similarity">
    <text evidence="1">Belongs to the FGAMS family.</text>
</comment>
<protein>
    <recommendedName>
        <fullName evidence="1">Phosphoribosylformylglycinamidine synthase subunit PurL</fullName>
        <shortName evidence="1">FGAM synthase</shortName>
        <ecNumber evidence="1">6.3.5.3</ecNumber>
    </recommendedName>
    <alternativeName>
        <fullName evidence="1">Formylglycinamide ribonucleotide amidotransferase subunit II</fullName>
        <shortName evidence="1">FGAR amidotransferase II</shortName>
        <shortName evidence="1">FGAR-AT II</shortName>
    </alternativeName>
    <alternativeName>
        <fullName evidence="1">Glutamine amidotransferase PurL</fullName>
    </alternativeName>
    <alternativeName>
        <fullName evidence="1">Phosphoribosylformylglycinamidine synthase subunit II</fullName>
    </alternativeName>
</protein>
<sequence>MGLNLLPIEMDDIRKRLDREPNEIEWRVIDAVWSEHCSYKSSKIFLKSFSIDSPNVIMGIKDWQDAGAVDIGDGWAIVIKVESHNHPSAIDPFNGAATGVGGIIRDIISKGAKPIALMDMIRVGNLKIRKNVWLLKNIIAGIAAYGNSIGVPVVGGELSFDDTYNDNPLVDVAAIGIVRKDKIKPSIVDKAGLKLVLAGLTGIDGLGGASFASRKLSGEDEIGAVQIADPFAGKIILDVTLEIADKVEAIKDLGGGGLAVAVTEMANGLGAIVDIEKIPLRVKNMDPADVIISETQERMLYAVEEKNVEEVCKAFEEYEYPCSVIGEITSEPIIKFRYFGKDLVSLPTNALLEPPKFLWPIKNVRKNVEEKNVDLSLESTIYTVLSHPDLVSKEWVYSQFDYEVNTSTVVKPGDANGAVVSLPNGKLLAIKADGNPDLCSEDAYECGKGIVAEAYRNLATVGARGMVAVDHLQFGDPKKPEVYYTFVEAIRGIGEATRFFNIPIVGGKVSFYNENSQGKPIKPTPLIVMAGLVQGKLLKNRVEDSSYVVLLGYTRKELGGSLLSKIFKVPSQAPKVRLQEDLLSSEVVIDAINEEKITFAKDISRGGLAASLFNIIVHGYGVEISTKSILSDTDNVVENLFSESSGRFVILTNEPEWIVEKSRSKGIVASIIGKVNKKTSILTIDNTDYDLKTIVNNYFNFLEEVIGNG</sequence>
<accession>C3MQF3</accession>
<keyword id="KW-0067">ATP-binding</keyword>
<keyword id="KW-0963">Cytoplasm</keyword>
<keyword id="KW-0436">Ligase</keyword>
<keyword id="KW-0460">Magnesium</keyword>
<keyword id="KW-0479">Metal-binding</keyword>
<keyword id="KW-0547">Nucleotide-binding</keyword>
<keyword id="KW-0658">Purine biosynthesis</keyword>
<proteinExistence type="inferred from homology"/>
<reference key="1">
    <citation type="journal article" date="2009" name="Proc. Natl. Acad. Sci. U.S.A.">
        <title>Biogeography of the Sulfolobus islandicus pan-genome.</title>
        <authorList>
            <person name="Reno M.L."/>
            <person name="Held N.L."/>
            <person name="Fields C.J."/>
            <person name="Burke P.V."/>
            <person name="Whitaker R.J."/>
        </authorList>
    </citation>
    <scope>NUCLEOTIDE SEQUENCE [LARGE SCALE GENOMIC DNA]</scope>
    <source>
        <strain>L.S.2.15 / Lassen #1</strain>
    </source>
</reference>
<dbReference type="EC" id="6.3.5.3" evidence="1"/>
<dbReference type="EMBL" id="CP001399">
    <property type="protein sequence ID" value="ACP35616.1"/>
    <property type="molecule type" value="Genomic_DNA"/>
</dbReference>
<dbReference type="RefSeq" id="WP_012713791.1">
    <property type="nucleotide sequence ID" value="NC_012589.1"/>
</dbReference>
<dbReference type="SMR" id="C3MQF3"/>
<dbReference type="GeneID" id="7807991"/>
<dbReference type="GeneID" id="7810114"/>
<dbReference type="KEGG" id="sis:LS215_1611"/>
<dbReference type="HOGENOM" id="CLU_003100_0_1_2"/>
<dbReference type="OrthoDB" id="8251at2157"/>
<dbReference type="UniPathway" id="UPA00074">
    <property type="reaction ID" value="UER00128"/>
</dbReference>
<dbReference type="Proteomes" id="UP000001747">
    <property type="component" value="Chromosome"/>
</dbReference>
<dbReference type="GO" id="GO:0005737">
    <property type="term" value="C:cytoplasm"/>
    <property type="evidence" value="ECO:0007669"/>
    <property type="project" value="UniProtKB-SubCell"/>
</dbReference>
<dbReference type="GO" id="GO:0005524">
    <property type="term" value="F:ATP binding"/>
    <property type="evidence" value="ECO:0007669"/>
    <property type="project" value="UniProtKB-UniRule"/>
</dbReference>
<dbReference type="GO" id="GO:0000287">
    <property type="term" value="F:magnesium ion binding"/>
    <property type="evidence" value="ECO:0007669"/>
    <property type="project" value="UniProtKB-UniRule"/>
</dbReference>
<dbReference type="GO" id="GO:0004642">
    <property type="term" value="F:phosphoribosylformylglycinamidine synthase activity"/>
    <property type="evidence" value="ECO:0007669"/>
    <property type="project" value="UniProtKB-UniRule"/>
</dbReference>
<dbReference type="GO" id="GO:0006189">
    <property type="term" value="P:'de novo' IMP biosynthetic process"/>
    <property type="evidence" value="ECO:0007669"/>
    <property type="project" value="UniProtKB-UniRule"/>
</dbReference>
<dbReference type="CDD" id="cd02203">
    <property type="entry name" value="PurL_repeat1"/>
    <property type="match status" value="1"/>
</dbReference>
<dbReference type="CDD" id="cd02204">
    <property type="entry name" value="PurL_repeat2"/>
    <property type="match status" value="1"/>
</dbReference>
<dbReference type="Gene3D" id="3.90.650.10">
    <property type="entry name" value="PurM-like C-terminal domain"/>
    <property type="match status" value="2"/>
</dbReference>
<dbReference type="Gene3D" id="3.30.1330.10">
    <property type="entry name" value="PurM-like, N-terminal domain"/>
    <property type="match status" value="2"/>
</dbReference>
<dbReference type="HAMAP" id="MF_00420">
    <property type="entry name" value="PurL_2"/>
    <property type="match status" value="1"/>
</dbReference>
<dbReference type="InterPro" id="IPR010074">
    <property type="entry name" value="PRibForGlyAmidine_synth_PurL"/>
</dbReference>
<dbReference type="InterPro" id="IPR041609">
    <property type="entry name" value="PurL_linker"/>
</dbReference>
<dbReference type="InterPro" id="IPR010918">
    <property type="entry name" value="PurM-like_C_dom"/>
</dbReference>
<dbReference type="InterPro" id="IPR036676">
    <property type="entry name" value="PurM-like_C_sf"/>
</dbReference>
<dbReference type="InterPro" id="IPR016188">
    <property type="entry name" value="PurM-like_N"/>
</dbReference>
<dbReference type="InterPro" id="IPR036921">
    <property type="entry name" value="PurM-like_N_sf"/>
</dbReference>
<dbReference type="NCBIfam" id="TIGR01736">
    <property type="entry name" value="FGAM_synth_II"/>
    <property type="match status" value="1"/>
</dbReference>
<dbReference type="NCBIfam" id="NF002290">
    <property type="entry name" value="PRK01213.1"/>
    <property type="match status" value="1"/>
</dbReference>
<dbReference type="PANTHER" id="PTHR43555">
    <property type="entry name" value="PHOSPHORIBOSYLFORMYLGLYCINAMIDINE SYNTHASE SUBUNIT PURL"/>
    <property type="match status" value="1"/>
</dbReference>
<dbReference type="PANTHER" id="PTHR43555:SF1">
    <property type="entry name" value="PHOSPHORIBOSYLFORMYLGLYCINAMIDINE SYNTHASE SUBUNIT PURL"/>
    <property type="match status" value="1"/>
</dbReference>
<dbReference type="Pfam" id="PF00586">
    <property type="entry name" value="AIRS"/>
    <property type="match status" value="2"/>
</dbReference>
<dbReference type="Pfam" id="PF02769">
    <property type="entry name" value="AIRS_C"/>
    <property type="match status" value="2"/>
</dbReference>
<dbReference type="Pfam" id="PF18072">
    <property type="entry name" value="FGAR-AT_linker"/>
    <property type="match status" value="1"/>
</dbReference>
<dbReference type="PIRSF" id="PIRSF001587">
    <property type="entry name" value="FGAM_synthase_II"/>
    <property type="match status" value="1"/>
</dbReference>
<dbReference type="SUPFAM" id="SSF56042">
    <property type="entry name" value="PurM C-terminal domain-like"/>
    <property type="match status" value="2"/>
</dbReference>
<dbReference type="SUPFAM" id="SSF55326">
    <property type="entry name" value="PurM N-terminal domain-like"/>
    <property type="match status" value="2"/>
</dbReference>
<name>PURL_SACI2</name>
<organism>
    <name type="scientific">Saccharolobus islandicus (strain L.S.2.15 / Lassen #1)</name>
    <name type="common">Sulfolobus islandicus</name>
    <dbReference type="NCBI Taxonomy" id="429572"/>
    <lineage>
        <taxon>Archaea</taxon>
        <taxon>Thermoproteota</taxon>
        <taxon>Thermoprotei</taxon>
        <taxon>Sulfolobales</taxon>
        <taxon>Sulfolobaceae</taxon>
        <taxon>Saccharolobus</taxon>
    </lineage>
</organism>
<feature type="chain" id="PRO_1000206046" description="Phosphoribosylformylglycinamidine synthase subunit PurL">
    <location>
        <begin position="1"/>
        <end position="709"/>
    </location>
</feature>
<feature type="active site" evidence="1">
    <location>
        <position position="36"/>
    </location>
</feature>
<feature type="active site" description="Proton acceptor" evidence="1">
    <location>
        <position position="84"/>
    </location>
</feature>
<feature type="binding site" evidence="1">
    <location>
        <position position="39"/>
    </location>
    <ligand>
        <name>ATP</name>
        <dbReference type="ChEBI" id="CHEBI:30616"/>
    </ligand>
</feature>
<feature type="binding site" evidence="1">
    <location>
        <position position="80"/>
    </location>
    <ligand>
        <name>ATP</name>
        <dbReference type="ChEBI" id="CHEBI:30616"/>
    </ligand>
</feature>
<feature type="binding site" evidence="1">
    <location>
        <position position="82"/>
    </location>
    <ligand>
        <name>Mg(2+)</name>
        <dbReference type="ChEBI" id="CHEBI:18420"/>
        <label>1</label>
    </ligand>
</feature>
<feature type="binding site" evidence="1">
    <location>
        <begin position="83"/>
        <end position="86"/>
    </location>
    <ligand>
        <name>substrate</name>
    </ligand>
</feature>
<feature type="binding site" evidence="1">
    <location>
        <position position="105"/>
    </location>
    <ligand>
        <name>substrate</name>
    </ligand>
</feature>
<feature type="binding site" evidence="1">
    <location>
        <position position="106"/>
    </location>
    <ligand>
        <name>Mg(2+)</name>
        <dbReference type="ChEBI" id="CHEBI:18420"/>
        <label>2</label>
    </ligand>
</feature>
<feature type="binding site" evidence="1">
    <location>
        <position position="226"/>
    </location>
    <ligand>
        <name>substrate</name>
    </ligand>
</feature>
<feature type="binding site" evidence="1">
    <location>
        <position position="252"/>
    </location>
    <ligand>
        <name>Mg(2+)</name>
        <dbReference type="ChEBI" id="CHEBI:18420"/>
        <label>2</label>
    </ligand>
</feature>
<feature type="binding site" evidence="1">
    <location>
        <begin position="294"/>
        <end position="296"/>
    </location>
    <ligand>
        <name>substrate</name>
    </ligand>
</feature>
<feature type="binding site" evidence="1">
    <location>
        <position position="470"/>
    </location>
    <ligand>
        <name>ATP</name>
        <dbReference type="ChEBI" id="CHEBI:30616"/>
    </ligand>
</feature>
<feature type="binding site" evidence="1">
    <location>
        <position position="507"/>
    </location>
    <ligand>
        <name>ATP</name>
        <dbReference type="ChEBI" id="CHEBI:30616"/>
    </ligand>
</feature>
<feature type="binding site" evidence="1">
    <location>
        <position position="510"/>
    </location>
    <ligand>
        <name>substrate</name>
    </ligand>
</feature>
<evidence type="ECO:0000255" key="1">
    <source>
        <dbReference type="HAMAP-Rule" id="MF_00420"/>
    </source>
</evidence>